<reference key="1">
    <citation type="journal article" date="2005" name="J. Gen. Virol.">
        <title>A novel class of herpesvirus with bivalve hosts.</title>
        <authorList>
            <person name="Davison A.J."/>
            <person name="Trus B.L."/>
            <person name="Cheng N."/>
            <person name="Steven A.C."/>
            <person name="Watson M.S."/>
            <person name="Cunningham C."/>
            <person name="Le Deuff R.M."/>
            <person name="Renault T."/>
        </authorList>
    </citation>
    <scope>NUCLEOTIDE SEQUENCE [LARGE SCALE GENOMIC DNA]</scope>
</reference>
<dbReference type="EMBL" id="AY509253">
    <property type="protein sequence ID" value="AAS00915.1"/>
    <property type="molecule type" value="Genomic_DNA"/>
</dbReference>
<dbReference type="RefSeq" id="YP_024568.1">
    <property type="nucleotide sequence ID" value="NC_005881.2"/>
</dbReference>
<dbReference type="SMR" id="Q6R7K0"/>
<dbReference type="KEGG" id="vg:2948242"/>
<dbReference type="Proteomes" id="UP000007021">
    <property type="component" value="Segment"/>
</dbReference>
<organismHost>
    <name type="scientific">Magallana gigas</name>
    <name type="common">Pacific oyster</name>
    <name type="synonym">Crassostrea gigas</name>
    <dbReference type="NCBI Taxonomy" id="29159"/>
</organismHost>
<organismHost>
    <name type="scientific">Pecten maximus</name>
    <name type="common">King scallop</name>
    <name type="synonym">Pilgrim's clam</name>
    <dbReference type="NCBI Taxonomy" id="6579"/>
</organismHost>
<protein>
    <recommendedName>
        <fullName>Uncharacterized protein ORF23</fullName>
    </recommendedName>
</protein>
<name>Y023_OSHVF</name>
<feature type="chain" id="PRO_0000385054" description="Uncharacterized protein ORF23">
    <location>
        <begin position="1"/>
        <end position="1272"/>
    </location>
</feature>
<feature type="region of interest" description="Disordered" evidence="2">
    <location>
        <begin position="1179"/>
        <end position="1231"/>
    </location>
</feature>
<feature type="coiled-coil region" evidence="1">
    <location>
        <begin position="185"/>
        <end position="212"/>
    </location>
</feature>
<feature type="coiled-coil region" evidence="1">
    <location>
        <begin position="246"/>
        <end position="274"/>
    </location>
</feature>
<feature type="coiled-coil region" evidence="1">
    <location>
        <begin position="607"/>
        <end position="640"/>
    </location>
</feature>
<feature type="compositionally biased region" description="Pro residues" evidence="2">
    <location>
        <begin position="1189"/>
        <end position="1203"/>
    </location>
</feature>
<feature type="compositionally biased region" description="Low complexity" evidence="2">
    <location>
        <begin position="1219"/>
        <end position="1231"/>
    </location>
</feature>
<accession>Q6R7K0</accession>
<proteinExistence type="predicted"/>
<gene>
    <name type="ORF">ORF23</name>
</gene>
<organism>
    <name type="scientific">Ostreid herpesvirus 1 (isolate France)</name>
    <name type="common">OsHV-1</name>
    <name type="synonym">Pacific oyster herpesvirus</name>
    <dbReference type="NCBI Taxonomy" id="654903"/>
    <lineage>
        <taxon>Viruses</taxon>
        <taxon>Duplodnaviria</taxon>
        <taxon>Heunggongvirae</taxon>
        <taxon>Peploviricota</taxon>
        <taxon>Herviviricetes</taxon>
        <taxon>Herpesvirales</taxon>
        <taxon>Malacoherpesviridae</taxon>
        <taxon>Ostreavirus</taxon>
        <taxon>Ostreavirus ostreidmalaco1</taxon>
        <taxon>Ostreid herpesvirus 1</taxon>
    </lineage>
</organism>
<evidence type="ECO:0000255" key="1"/>
<evidence type="ECO:0000256" key="2">
    <source>
        <dbReference type="SAM" id="MobiDB-lite"/>
    </source>
</evidence>
<keyword id="KW-0175">Coiled coil</keyword>
<keyword id="KW-1185">Reference proteome</keyword>
<keyword id="KW-0677">Repeat</keyword>
<sequence>MFNKDLTIDNLFTEDVIIDPTKTQFSKTFQNDIELDTKEIRWIFYADMEMHGRKGVDIAFPTRFEVMKTLKINKYSFLTGNDFSSGMGIIMEISRNTITLHIPKEPCFKNITFLTMGYGSGSQMTLAGPKPKLEFNNPAVVAWINSILSYLPGVENSIFEKGGDYFPNSNDERVAYTIWDRMDRIEFLDEIEKAELKKRRKEGNLTIEEAVNIEIKSAVNFYTNFSNQGVLQNTPYGYLTALLSFKNSAEEKEKKLRLSKKKEQLEKIQEYLDANQFENALKMLGEESIAKDSLKRYYKIVTDDLVYGGLNDYINVVFEKYEELEKIQADTHTQIKNELEESVYIFINTLQMRGSDNLASKKNALESYDSQFYLTGEMLGKTAANMINKQNKTSADRKIIEKKTARTSVTFNSIMERRQAMDRINQKIIDREGAIRQSMLVKERLLIAASDIDDIPIDGIHYVYNQEESELLASAQRLNLTVGEESLNLVEVLVSRLNRGMPNKFLEITEEFIEYLKLIMGELSFVVTGTHFDWPEINNLITFNVMASDEVPWRSIDEMKDMLELTKSLDIVFPFDKRFAATKNEELNISEFLNSYPGFSLPSVKAALGKDLEKLIKLVNDHDQEIQKIYKEVEKLNTVILKAVTDGTRTENINDVGGVVKRLDAVAKSGFSKEVTGWKLLEYICDYYSNLSLPPSFNILRRMTDTERGLFTYFTTRYAGKIEIFEEEDRVYEVLLEKIHSQTMLDLVKDNKEKAIKKIKDFILHHCKEYKGEFESTNTTAYMNRLEIIKIEDPGFAEISRGMMAGVDDKFFPALDELLKKWRRTDMEGYVHGVLNQGIGDILALTEIKKNVKEPEVVFETTAINLIKKLAAITKPYDVDAFKINEVDYDIMDSLLTGIFLNKYLAFIPIAELSKDRYLAANVSEVKLNNYTVVTFEDLLAQSARRRGDDGDVAMMTSDTKKQAIDFAIEKLKKHDINTIPIMMFYEFINDRFKKRLSDVNFNRNTLTDEGTPLRIIMDGNTFRQMPVYIYDDLLRKKNIGAQNTIGQALTLTRIVNLVPYEETLMVNDPTETSTDLEWDPLIQSTPSGLSFYDDDIPRPTNLPGLEALRTPSIFSEINVITPGFIQQPPPTDPALALQFLTNRTEVQNLLNEYEVSTPGPTDTQDMFVISDTLAPIPELPETSQQPVVPTPPATRPSSPIPPESDILTEEEQLEEQPPRQQQATRKTTTTVSIEAEDFIAYLRLKTLEQQMVDELKSILPPDTEEEEEEEE</sequence>